<feature type="chain" id="PRO_0000300301" description="DNA-directed RNA polymerase subunit beta">
    <location>
        <begin position="1"/>
        <end position="1241"/>
    </location>
</feature>
<feature type="region of interest" description="Disordered" evidence="2">
    <location>
        <begin position="1186"/>
        <end position="1210"/>
    </location>
</feature>
<feature type="compositionally biased region" description="Acidic residues" evidence="2">
    <location>
        <begin position="1200"/>
        <end position="1210"/>
    </location>
</feature>
<dbReference type="EC" id="2.7.7.6" evidence="1"/>
<dbReference type="EMBL" id="CP000382">
    <property type="protein sequence ID" value="ABK61102.1"/>
    <property type="molecule type" value="Genomic_DNA"/>
</dbReference>
<dbReference type="RefSeq" id="WP_011721210.1">
    <property type="nucleotide sequence ID" value="NC_008593.1"/>
</dbReference>
<dbReference type="SMR" id="A0PXT8"/>
<dbReference type="STRING" id="386415.NT01CX_1107"/>
<dbReference type="KEGG" id="cno:NT01CX_1107"/>
<dbReference type="eggNOG" id="COG0085">
    <property type="taxonomic scope" value="Bacteria"/>
</dbReference>
<dbReference type="HOGENOM" id="CLU_000524_4_1_9"/>
<dbReference type="Proteomes" id="UP000008220">
    <property type="component" value="Chromosome"/>
</dbReference>
<dbReference type="GO" id="GO:0000428">
    <property type="term" value="C:DNA-directed RNA polymerase complex"/>
    <property type="evidence" value="ECO:0007669"/>
    <property type="project" value="UniProtKB-KW"/>
</dbReference>
<dbReference type="GO" id="GO:0003677">
    <property type="term" value="F:DNA binding"/>
    <property type="evidence" value="ECO:0007669"/>
    <property type="project" value="UniProtKB-UniRule"/>
</dbReference>
<dbReference type="GO" id="GO:0003899">
    <property type="term" value="F:DNA-directed RNA polymerase activity"/>
    <property type="evidence" value="ECO:0007669"/>
    <property type="project" value="UniProtKB-UniRule"/>
</dbReference>
<dbReference type="GO" id="GO:0032549">
    <property type="term" value="F:ribonucleoside binding"/>
    <property type="evidence" value="ECO:0007669"/>
    <property type="project" value="InterPro"/>
</dbReference>
<dbReference type="GO" id="GO:0006351">
    <property type="term" value="P:DNA-templated transcription"/>
    <property type="evidence" value="ECO:0007669"/>
    <property type="project" value="UniProtKB-UniRule"/>
</dbReference>
<dbReference type="CDD" id="cd00653">
    <property type="entry name" value="RNA_pol_B_RPB2"/>
    <property type="match status" value="1"/>
</dbReference>
<dbReference type="FunFam" id="3.90.1800.10:FF:000001">
    <property type="entry name" value="DNA-directed RNA polymerase subunit beta"/>
    <property type="match status" value="1"/>
</dbReference>
<dbReference type="Gene3D" id="2.40.50.100">
    <property type="match status" value="1"/>
</dbReference>
<dbReference type="Gene3D" id="2.40.50.150">
    <property type="match status" value="1"/>
</dbReference>
<dbReference type="Gene3D" id="3.90.1100.10">
    <property type="match status" value="2"/>
</dbReference>
<dbReference type="Gene3D" id="2.30.150.10">
    <property type="entry name" value="DNA-directed RNA polymerase, beta subunit, external 1 domain"/>
    <property type="match status" value="1"/>
</dbReference>
<dbReference type="Gene3D" id="2.40.270.10">
    <property type="entry name" value="DNA-directed RNA polymerase, subunit 2, domain 6"/>
    <property type="match status" value="2"/>
</dbReference>
<dbReference type="Gene3D" id="3.90.1800.10">
    <property type="entry name" value="RNA polymerase alpha subunit dimerisation domain"/>
    <property type="match status" value="1"/>
</dbReference>
<dbReference type="Gene3D" id="3.90.1110.10">
    <property type="entry name" value="RNA polymerase Rpb2, domain 2"/>
    <property type="match status" value="2"/>
</dbReference>
<dbReference type="HAMAP" id="MF_01321">
    <property type="entry name" value="RNApol_bact_RpoB"/>
    <property type="match status" value="1"/>
</dbReference>
<dbReference type="InterPro" id="IPR042107">
    <property type="entry name" value="DNA-dir_RNA_pol_bsu_ext_1_sf"/>
</dbReference>
<dbReference type="InterPro" id="IPR019462">
    <property type="entry name" value="DNA-dir_RNA_pol_bsu_external_1"/>
</dbReference>
<dbReference type="InterPro" id="IPR015712">
    <property type="entry name" value="DNA-dir_RNA_pol_su2"/>
</dbReference>
<dbReference type="InterPro" id="IPR007120">
    <property type="entry name" value="DNA-dir_RNAP_su2_dom"/>
</dbReference>
<dbReference type="InterPro" id="IPR037033">
    <property type="entry name" value="DNA-dir_RNAP_su2_hyb_sf"/>
</dbReference>
<dbReference type="InterPro" id="IPR010243">
    <property type="entry name" value="RNA_pol_bsu_bac"/>
</dbReference>
<dbReference type="InterPro" id="IPR007121">
    <property type="entry name" value="RNA_pol_bsu_CS"/>
</dbReference>
<dbReference type="InterPro" id="IPR007644">
    <property type="entry name" value="RNA_pol_bsu_protrusion"/>
</dbReference>
<dbReference type="InterPro" id="IPR007642">
    <property type="entry name" value="RNA_pol_Rpb2_2"/>
</dbReference>
<dbReference type="InterPro" id="IPR037034">
    <property type="entry name" value="RNA_pol_Rpb2_2_sf"/>
</dbReference>
<dbReference type="InterPro" id="IPR007645">
    <property type="entry name" value="RNA_pol_Rpb2_3"/>
</dbReference>
<dbReference type="InterPro" id="IPR007641">
    <property type="entry name" value="RNA_pol_Rpb2_7"/>
</dbReference>
<dbReference type="InterPro" id="IPR014724">
    <property type="entry name" value="RNA_pol_RPB2_OB-fold"/>
</dbReference>
<dbReference type="NCBIfam" id="NF001616">
    <property type="entry name" value="PRK00405.1"/>
    <property type="match status" value="1"/>
</dbReference>
<dbReference type="NCBIfam" id="TIGR02013">
    <property type="entry name" value="rpoB"/>
    <property type="match status" value="1"/>
</dbReference>
<dbReference type="PANTHER" id="PTHR20856">
    <property type="entry name" value="DNA-DIRECTED RNA POLYMERASE I SUBUNIT 2"/>
    <property type="match status" value="1"/>
</dbReference>
<dbReference type="Pfam" id="PF04563">
    <property type="entry name" value="RNA_pol_Rpb2_1"/>
    <property type="match status" value="1"/>
</dbReference>
<dbReference type="Pfam" id="PF04561">
    <property type="entry name" value="RNA_pol_Rpb2_2"/>
    <property type="match status" value="1"/>
</dbReference>
<dbReference type="Pfam" id="PF04565">
    <property type="entry name" value="RNA_pol_Rpb2_3"/>
    <property type="match status" value="1"/>
</dbReference>
<dbReference type="Pfam" id="PF10385">
    <property type="entry name" value="RNA_pol_Rpb2_45"/>
    <property type="match status" value="1"/>
</dbReference>
<dbReference type="Pfam" id="PF00562">
    <property type="entry name" value="RNA_pol_Rpb2_6"/>
    <property type="match status" value="1"/>
</dbReference>
<dbReference type="Pfam" id="PF04560">
    <property type="entry name" value="RNA_pol_Rpb2_7"/>
    <property type="match status" value="1"/>
</dbReference>
<dbReference type="SUPFAM" id="SSF64484">
    <property type="entry name" value="beta and beta-prime subunits of DNA dependent RNA-polymerase"/>
    <property type="match status" value="1"/>
</dbReference>
<dbReference type="PROSITE" id="PS01166">
    <property type="entry name" value="RNA_POL_BETA"/>
    <property type="match status" value="1"/>
</dbReference>
<organism>
    <name type="scientific">Clostridium novyi (strain NT)</name>
    <dbReference type="NCBI Taxonomy" id="386415"/>
    <lineage>
        <taxon>Bacteria</taxon>
        <taxon>Bacillati</taxon>
        <taxon>Bacillota</taxon>
        <taxon>Clostridia</taxon>
        <taxon>Eubacteriales</taxon>
        <taxon>Clostridiaceae</taxon>
        <taxon>Clostridium</taxon>
    </lineage>
</organism>
<sequence length="1241" mass="139720">MVHPIQIGKRTRMSFSKVKEMCPMPNLIEVQLNSYDWFWKEGLNEVFDDVNPIQDYTGNLILEFIDYNLDKDAIKYSVEECKERDATYAAPLKVKVRLLNKETGEVKEQEVFMGDFPLMTQQGTFVINGAERVIVSQLVRSPGAYYGYDVDKTGKKLFSSTVIPNRGAWLEYETDSNDIIYVRIDKTRKLPISILIRALGLGSDAEIVDWFGEEERLKATIEKDNTKTREEALLEIYKRLRPGEPPTVDSALSLINSLFFDAKRYDLSRVGRYKFNKKLAIYIRLLNQVAAEDVVNPFTGEIIVQKGETIDREKALEIQNCAINAVNIQVEDKVIKVIGNNFVDIHKFIDFDISDLKIKEHVHYPTLKNILDNYTDEKSIKEEIKKNIHELIPKHIVVDDIYATISYELGLPYEIGTIDDIDHLGNRRLRSVGELLQNQFRIGLSRMERVVKERMTIQDQEVITPQALINIRPVAAAIKEFFGSSQLSQFMDQTNPLSELTHKRRLSALGPGGLSRERAGFEVRDVHHSHYGRMCPIETPEGPNIGLINSLACYAKVNEYGFIETPYRLVDKKEARVTDEIVYLTADEEDHYLVAQAKEPLDENGCFIDEKITVRDLEDVIVVSKDQVDLMDVSPSQIVSVATAMIPFLENDDASRALMGSNMQRQAVPLLKPAAPIVGTGIEYKAAVDSGVLPKAEHDGVIEYVSSTEVRIRRDSDGGLDKHKLLKYKRSNQGTCINQRPIVSKGEKVKAGDVLADGPSTDFGEIALGQNIRMGFITWEGYNYEDAMLVSEQLVRDDIFTSIHIEEYESEARDTKLGPEEITRDIPNVGEDALKNIDERGIVRIGAEVRSGDILVGKVTPKGETELTAEERLLRAIFGEKAREVRDTSLRVPHGEAGIIVDVKVFTRENGDELPPGVNELVRCYIAQKRKISVGDKMAGRHGNKGVISRILPEEDMPFLPDGRPLQICLNPLGVPSRMNIGQVLEVHLGWAAGEMGWHIATPVFNGAFEDEIVELLQEAGYSEDGKTVLYDGRTGEPFDNRVTVGYMYILKLHHLVDDKIHARSTGPYSLVTQQPLGGKAQFGGQRFGEMEVWALEAYGAAHTLQEVLTVKSDDVVGRVKTYEAIVKGENIPEPGVPESFKVLIKELQALCLDVKVLSDTNEEIKIKESSEEDMEDLGVNIEGTEDEIVPTAEKRSSNQDEEALELVDNEEFEDIKLEYDDLQLDELENGLELEDFNDEH</sequence>
<proteinExistence type="inferred from homology"/>
<keyword id="KW-0240">DNA-directed RNA polymerase</keyword>
<keyword id="KW-0548">Nucleotidyltransferase</keyword>
<keyword id="KW-1185">Reference proteome</keyword>
<keyword id="KW-0804">Transcription</keyword>
<keyword id="KW-0808">Transferase</keyword>
<evidence type="ECO:0000255" key="1">
    <source>
        <dbReference type="HAMAP-Rule" id="MF_01321"/>
    </source>
</evidence>
<evidence type="ECO:0000256" key="2">
    <source>
        <dbReference type="SAM" id="MobiDB-lite"/>
    </source>
</evidence>
<name>RPOB_CLONN</name>
<gene>
    <name evidence="1" type="primary">rpoB</name>
    <name type="ordered locus">NT01CX_1107</name>
</gene>
<reference key="1">
    <citation type="journal article" date="2006" name="Nat. Biotechnol.">
        <title>The genome and transcriptomes of the anti-tumor agent Clostridium novyi-NT.</title>
        <authorList>
            <person name="Bettegowda C."/>
            <person name="Huang X."/>
            <person name="Lin J."/>
            <person name="Cheong I."/>
            <person name="Kohli M."/>
            <person name="Szabo S.A."/>
            <person name="Zhang X."/>
            <person name="Diaz L.A. Jr."/>
            <person name="Velculescu V.E."/>
            <person name="Parmigiani G."/>
            <person name="Kinzler K.W."/>
            <person name="Vogelstein B."/>
            <person name="Zhou S."/>
        </authorList>
    </citation>
    <scope>NUCLEOTIDE SEQUENCE [LARGE SCALE GENOMIC DNA]</scope>
    <source>
        <strain>NT</strain>
    </source>
</reference>
<protein>
    <recommendedName>
        <fullName evidence="1">DNA-directed RNA polymerase subunit beta</fullName>
        <shortName evidence="1">RNAP subunit beta</shortName>
        <ecNumber evidence="1">2.7.7.6</ecNumber>
    </recommendedName>
    <alternativeName>
        <fullName evidence="1">RNA polymerase subunit beta</fullName>
    </alternativeName>
    <alternativeName>
        <fullName evidence="1">Transcriptase subunit beta</fullName>
    </alternativeName>
</protein>
<comment type="function">
    <text evidence="1">DNA-dependent RNA polymerase catalyzes the transcription of DNA into RNA using the four ribonucleoside triphosphates as substrates.</text>
</comment>
<comment type="catalytic activity">
    <reaction evidence="1">
        <text>RNA(n) + a ribonucleoside 5'-triphosphate = RNA(n+1) + diphosphate</text>
        <dbReference type="Rhea" id="RHEA:21248"/>
        <dbReference type="Rhea" id="RHEA-COMP:14527"/>
        <dbReference type="Rhea" id="RHEA-COMP:17342"/>
        <dbReference type="ChEBI" id="CHEBI:33019"/>
        <dbReference type="ChEBI" id="CHEBI:61557"/>
        <dbReference type="ChEBI" id="CHEBI:140395"/>
        <dbReference type="EC" id="2.7.7.6"/>
    </reaction>
</comment>
<comment type="subunit">
    <text evidence="1">The RNAP catalytic core consists of 2 alpha, 1 beta, 1 beta' and 1 omega subunit. When a sigma factor is associated with the core the holoenzyme is formed, which can initiate transcription.</text>
</comment>
<comment type="similarity">
    <text evidence="1">Belongs to the RNA polymerase beta chain family.</text>
</comment>
<accession>A0PXT8</accession>